<feature type="chain" id="PRO_0000224010" description="Large ribosomal subunit protein bL33">
    <location>
        <begin position="1"/>
        <end position="20" status="greater than"/>
    </location>
</feature>
<feature type="non-terminal residue">
    <location>
        <position position="20"/>
    </location>
</feature>
<proteinExistence type="evidence at protein level"/>
<dbReference type="GO" id="GO:1990904">
    <property type="term" value="C:ribonucleoprotein complex"/>
    <property type="evidence" value="ECO:0007669"/>
    <property type="project" value="UniProtKB-KW"/>
</dbReference>
<dbReference type="GO" id="GO:0005840">
    <property type="term" value="C:ribosome"/>
    <property type="evidence" value="ECO:0007669"/>
    <property type="project" value="UniProtKB-KW"/>
</dbReference>
<organism>
    <name type="scientific">Brevundimonas vesicularis</name>
    <name type="common">Pseudomonas vesicularis</name>
    <dbReference type="NCBI Taxonomy" id="41276"/>
    <lineage>
        <taxon>Bacteria</taxon>
        <taxon>Pseudomonadati</taxon>
        <taxon>Pseudomonadota</taxon>
        <taxon>Alphaproteobacteria</taxon>
        <taxon>Caulobacterales</taxon>
        <taxon>Caulobacteraceae</taxon>
        <taxon>Brevundimonas</taxon>
    </lineage>
</organism>
<keyword id="KW-0903">Direct protein sequencing</keyword>
<keyword id="KW-0687">Ribonucleoprotein</keyword>
<keyword id="KW-0689">Ribosomal protein</keyword>
<name>RL33_BREVE</name>
<accession>Q9R4N8</accession>
<sequence length="20" mass="2185">CKPASIKIRLNSTADTGFYV</sequence>
<comment type="similarity">
    <text evidence="1">Belongs to the bacterial ribosomal protein bL33 family.</text>
</comment>
<evidence type="ECO:0000305" key="1"/>
<reference key="1">
    <citation type="journal article" date="1995" name="Int. J. Syst. Bacteriol.">
        <title>Comparative ribosomal protein sequence analyses of a phylogenetically defined genus, Pseudomonas, and its relatives.</title>
        <authorList>
            <person name="Ochi K."/>
        </authorList>
    </citation>
    <scope>PROTEIN SEQUENCE</scope>
    <source>
        <strain>ATCC 11426 / DSM 7226 / JCM 1477 / LMG 2350 / NBRC 12165 / NCIMB 1945 / NCTC 10900</strain>
    </source>
</reference>
<protein>
    <recommendedName>
        <fullName evidence="1">Large ribosomal subunit protein bL33</fullName>
    </recommendedName>
    <alternativeName>
        <fullName>50S ribosomal protein L33</fullName>
    </alternativeName>
</protein>
<gene>
    <name type="primary">rpmG</name>
</gene>